<evidence type="ECO:0000250" key="1"/>
<evidence type="ECO:0000250" key="2">
    <source>
        <dbReference type="UniProtKB" id="Q9LQQ4"/>
    </source>
</evidence>
<evidence type="ECO:0000256" key="3">
    <source>
        <dbReference type="SAM" id="MobiDB-lite"/>
    </source>
</evidence>
<evidence type="ECO:0000305" key="4"/>
<protein>
    <recommendedName>
        <fullName>Histone H2B.2</fullName>
    </recommendedName>
    <alternativeName>
        <fullName>HTB8</fullName>
    </alternativeName>
</protein>
<dbReference type="EMBL" id="AC011438">
    <property type="protein sequence ID" value="AAF18256.1"/>
    <property type="molecule type" value="Genomic_DNA"/>
</dbReference>
<dbReference type="EMBL" id="AC026875">
    <property type="protein sequence ID" value="AAF79830.1"/>
    <property type="molecule type" value="Genomic_DNA"/>
</dbReference>
<dbReference type="EMBL" id="CP002684">
    <property type="protein sequence ID" value="AEE28257.1"/>
    <property type="molecule type" value="Genomic_DNA"/>
</dbReference>
<dbReference type="EMBL" id="DQ056448">
    <property type="protein sequence ID" value="AAY78605.1"/>
    <property type="molecule type" value="mRNA"/>
</dbReference>
<dbReference type="RefSeq" id="NP_172295.1">
    <property type="nucleotide sequence ID" value="NM_100691.2"/>
</dbReference>
<dbReference type="SMR" id="Q9SGE3"/>
<dbReference type="FunCoup" id="Q9SGE3">
    <property type="interactions" value="20"/>
</dbReference>
<dbReference type="STRING" id="3702.Q9SGE3"/>
<dbReference type="MetOSite" id="Q9SGE3"/>
<dbReference type="PaxDb" id="3702-AT1G08170.1"/>
<dbReference type="ProteomicsDB" id="230179"/>
<dbReference type="EnsemblPlants" id="AT1G08170.1">
    <property type="protein sequence ID" value="AT1G08170.1"/>
    <property type="gene ID" value="AT1G08170"/>
</dbReference>
<dbReference type="GeneID" id="837338"/>
<dbReference type="Gramene" id="AT1G08170.1">
    <property type="protein sequence ID" value="AT1G08170.1"/>
    <property type="gene ID" value="AT1G08170"/>
</dbReference>
<dbReference type="KEGG" id="ath:AT1G08170"/>
<dbReference type="Araport" id="AT1G08170"/>
<dbReference type="TAIR" id="AT1G08170"/>
<dbReference type="eggNOG" id="KOG1744">
    <property type="taxonomic scope" value="Eukaryota"/>
</dbReference>
<dbReference type="HOGENOM" id="CLU_075666_0_0_1"/>
<dbReference type="InParanoid" id="Q9SGE3"/>
<dbReference type="OMA" id="ANDQETQ"/>
<dbReference type="PhylomeDB" id="Q9SGE3"/>
<dbReference type="PRO" id="PR:Q9SGE3"/>
<dbReference type="Proteomes" id="UP000006548">
    <property type="component" value="Chromosome 1"/>
</dbReference>
<dbReference type="ExpressionAtlas" id="Q9SGE3">
    <property type="expression patterns" value="baseline and differential"/>
</dbReference>
<dbReference type="GO" id="GO:0000786">
    <property type="term" value="C:nucleosome"/>
    <property type="evidence" value="ECO:0007669"/>
    <property type="project" value="UniProtKB-KW"/>
</dbReference>
<dbReference type="GO" id="GO:0005634">
    <property type="term" value="C:nucleus"/>
    <property type="evidence" value="ECO:0007669"/>
    <property type="project" value="UniProtKB-SubCell"/>
</dbReference>
<dbReference type="GO" id="GO:0003677">
    <property type="term" value="F:DNA binding"/>
    <property type="evidence" value="ECO:0007669"/>
    <property type="project" value="UniProtKB-KW"/>
</dbReference>
<dbReference type="GO" id="GO:0046982">
    <property type="term" value="F:protein heterodimerization activity"/>
    <property type="evidence" value="ECO:0007669"/>
    <property type="project" value="InterPro"/>
</dbReference>
<dbReference type="GO" id="GO:0030527">
    <property type="term" value="F:structural constituent of chromatin"/>
    <property type="evidence" value="ECO:0007669"/>
    <property type="project" value="InterPro"/>
</dbReference>
<dbReference type="CDD" id="cd22910">
    <property type="entry name" value="HFD_H2B"/>
    <property type="match status" value="1"/>
</dbReference>
<dbReference type="FunFam" id="1.10.20.10:FF:000043">
    <property type="entry name" value="Histone H2B"/>
    <property type="match status" value="1"/>
</dbReference>
<dbReference type="Gene3D" id="1.10.20.10">
    <property type="entry name" value="Histone, subunit A"/>
    <property type="match status" value="1"/>
</dbReference>
<dbReference type="InterPro" id="IPR009072">
    <property type="entry name" value="Histone-fold"/>
</dbReference>
<dbReference type="InterPro" id="IPR007125">
    <property type="entry name" value="Histone_H2A/H2B/H3"/>
</dbReference>
<dbReference type="InterPro" id="IPR000558">
    <property type="entry name" value="Histone_H2B"/>
</dbReference>
<dbReference type="PANTHER" id="PTHR23428">
    <property type="entry name" value="HISTONE H2B"/>
    <property type="match status" value="1"/>
</dbReference>
<dbReference type="Pfam" id="PF00125">
    <property type="entry name" value="Histone"/>
    <property type="match status" value="1"/>
</dbReference>
<dbReference type="PRINTS" id="PR00621">
    <property type="entry name" value="HISTONEH2B"/>
</dbReference>
<dbReference type="SMART" id="SM00427">
    <property type="entry name" value="H2B"/>
    <property type="match status" value="1"/>
</dbReference>
<dbReference type="SUPFAM" id="SSF47113">
    <property type="entry name" value="Histone-fold"/>
    <property type="match status" value="1"/>
</dbReference>
<sequence length="243" mass="27221">MAPRKPKVVSVTKKKKVVEETIKVTVTEEGDPCVITETANDQETQDLTFSIPVGENVTTVEIPVEVPDERSLPVGENVTTVKIPVDDRDESSPQPPETPVEVRDEPSPQPPETPASKSEGTLKKTDKVEKKQENKKKKKKKKRDDLAGDEYRRYVYKVMKQVHPDLGITSKAMTVVNMFMGDMFERIAQEAARLSDYTKRRTLSSREIEAAVRLVLPGELSRHAVAEGSKAVSNFVGYDSRKR</sequence>
<organism>
    <name type="scientific">Arabidopsis thaliana</name>
    <name type="common">Mouse-ear cress</name>
    <dbReference type="NCBI Taxonomy" id="3702"/>
    <lineage>
        <taxon>Eukaryota</taxon>
        <taxon>Viridiplantae</taxon>
        <taxon>Streptophyta</taxon>
        <taxon>Embryophyta</taxon>
        <taxon>Tracheophyta</taxon>
        <taxon>Spermatophyta</taxon>
        <taxon>Magnoliopsida</taxon>
        <taxon>eudicotyledons</taxon>
        <taxon>Gunneridae</taxon>
        <taxon>Pentapetalae</taxon>
        <taxon>rosids</taxon>
        <taxon>malvids</taxon>
        <taxon>Brassicales</taxon>
        <taxon>Brassicaceae</taxon>
        <taxon>Camelineae</taxon>
        <taxon>Arabidopsis</taxon>
    </lineage>
</organism>
<comment type="function">
    <text>Core component of nucleosome. Nucleosomes wrap and compact DNA into chromatin, limiting DNA accessibility to the cellular machineries which require DNA as a template. Histones thereby play a central role in transcription regulation, DNA repair, DNA replication and chromosomal stability. DNA accessibility is regulated via a complex set of post-translational modifications of histones, also called histone code, and nucleosome remodeling.</text>
</comment>
<comment type="subunit">
    <text>The nucleosome is a histone octamer containing two molecules each of H2A, H2B, H3 and H4 assembled in one H3-H4 heterotetramer and two H2A-H2B heterodimers. The octamer wraps approximately 147 bp of DNA.</text>
</comment>
<comment type="subcellular location">
    <subcellularLocation>
        <location evidence="1">Nucleus</location>
    </subcellularLocation>
    <subcellularLocation>
        <location evidence="1">Chromosome</location>
    </subcellularLocation>
</comment>
<comment type="PTM">
    <text evidence="1">Can be acetylated to form H2BK6ac.</text>
</comment>
<comment type="similarity">
    <text evidence="4">Belongs to the histone H2B family.</text>
</comment>
<comment type="caution">
    <text evidence="4">To ensure consistency between histone entries, we follow the 'Brno' nomenclature for histone modifications, with positions referring to those used in the literature for the 'closest' model organism. Due to slight variations in histone sequences between organisms and to the presence of initiator methionine in UniProtKB/Swiss-Prot sequences, the actual positions of modified amino acids in the sequence generally differ. In this entry the following conventions are used: H2BK6ac = acetylated Lys-7.</text>
</comment>
<gene>
    <name type="ordered locus">At1g08170</name>
    <name type="ORF">T23G18.3</name>
    <name type="ORF">T6D22.26</name>
</gene>
<proteinExistence type="evidence at transcript level"/>
<reference key="1">
    <citation type="journal article" date="2000" name="Nature">
        <title>Sequence and analysis of chromosome 1 of the plant Arabidopsis thaliana.</title>
        <authorList>
            <person name="Theologis A."/>
            <person name="Ecker J.R."/>
            <person name="Palm C.J."/>
            <person name="Federspiel N.A."/>
            <person name="Kaul S."/>
            <person name="White O."/>
            <person name="Alonso J."/>
            <person name="Altafi H."/>
            <person name="Araujo R."/>
            <person name="Bowman C.L."/>
            <person name="Brooks S.Y."/>
            <person name="Buehler E."/>
            <person name="Chan A."/>
            <person name="Chao Q."/>
            <person name="Chen H."/>
            <person name="Cheuk R.F."/>
            <person name="Chin C.W."/>
            <person name="Chung M.K."/>
            <person name="Conn L."/>
            <person name="Conway A.B."/>
            <person name="Conway A.R."/>
            <person name="Creasy T.H."/>
            <person name="Dewar K."/>
            <person name="Dunn P."/>
            <person name="Etgu P."/>
            <person name="Feldblyum T.V."/>
            <person name="Feng J.-D."/>
            <person name="Fong B."/>
            <person name="Fujii C.Y."/>
            <person name="Gill J.E."/>
            <person name="Goldsmith A.D."/>
            <person name="Haas B."/>
            <person name="Hansen N.F."/>
            <person name="Hughes B."/>
            <person name="Huizar L."/>
            <person name="Hunter J.L."/>
            <person name="Jenkins J."/>
            <person name="Johnson-Hopson C."/>
            <person name="Khan S."/>
            <person name="Khaykin E."/>
            <person name="Kim C.J."/>
            <person name="Koo H.L."/>
            <person name="Kremenetskaia I."/>
            <person name="Kurtz D.B."/>
            <person name="Kwan A."/>
            <person name="Lam B."/>
            <person name="Langin-Hooper S."/>
            <person name="Lee A."/>
            <person name="Lee J.M."/>
            <person name="Lenz C.A."/>
            <person name="Li J.H."/>
            <person name="Li Y.-P."/>
            <person name="Lin X."/>
            <person name="Liu S.X."/>
            <person name="Liu Z.A."/>
            <person name="Luros J.S."/>
            <person name="Maiti R."/>
            <person name="Marziali A."/>
            <person name="Militscher J."/>
            <person name="Miranda M."/>
            <person name="Nguyen M."/>
            <person name="Nierman W.C."/>
            <person name="Osborne B.I."/>
            <person name="Pai G."/>
            <person name="Peterson J."/>
            <person name="Pham P.K."/>
            <person name="Rizzo M."/>
            <person name="Rooney T."/>
            <person name="Rowley D."/>
            <person name="Sakano H."/>
            <person name="Salzberg S.L."/>
            <person name="Schwartz J.R."/>
            <person name="Shinn P."/>
            <person name="Southwick A.M."/>
            <person name="Sun H."/>
            <person name="Tallon L.J."/>
            <person name="Tambunga G."/>
            <person name="Toriumi M.J."/>
            <person name="Town C.D."/>
            <person name="Utterback T."/>
            <person name="Van Aken S."/>
            <person name="Vaysberg M."/>
            <person name="Vysotskaia V.S."/>
            <person name="Walker M."/>
            <person name="Wu D."/>
            <person name="Yu G."/>
            <person name="Fraser C.M."/>
            <person name="Venter J.C."/>
            <person name="Davis R.W."/>
        </authorList>
    </citation>
    <scope>NUCLEOTIDE SEQUENCE [LARGE SCALE GENOMIC DNA]</scope>
    <source>
        <strain>cv. Columbia</strain>
    </source>
</reference>
<reference key="2">
    <citation type="journal article" date="2017" name="Plant J.">
        <title>Araport11: a complete reannotation of the Arabidopsis thaliana reference genome.</title>
        <authorList>
            <person name="Cheng C.Y."/>
            <person name="Krishnakumar V."/>
            <person name="Chan A.P."/>
            <person name="Thibaud-Nissen F."/>
            <person name="Schobel S."/>
            <person name="Town C.D."/>
        </authorList>
    </citation>
    <scope>GENOME REANNOTATION</scope>
    <source>
        <strain>cv. Columbia</strain>
    </source>
</reference>
<reference key="3">
    <citation type="submission" date="2005-05" db="EMBL/GenBank/DDBJ databases">
        <authorList>
            <person name="Underwood B.A."/>
            <person name="Xiao Y.-L."/>
            <person name="Moskal W.A. Jr."/>
            <person name="Monaghan E.L."/>
            <person name="Wang W."/>
            <person name="Redman J.C."/>
            <person name="Wu H.C."/>
            <person name="Utterback T."/>
            <person name="Town C.D."/>
        </authorList>
    </citation>
    <scope>NUCLEOTIDE SEQUENCE [LARGE SCALE MRNA]</scope>
    <source>
        <strain>cv. Columbia</strain>
    </source>
</reference>
<name>H2B2_ARATH</name>
<accession>Q9SGE3</accession>
<feature type="initiator methionine" description="Removed" evidence="2">
    <location>
        <position position="1"/>
    </location>
</feature>
<feature type="chain" id="PRO_0000238689" description="Histone H2B.2">
    <location>
        <begin position="2"/>
        <end position="243"/>
    </location>
</feature>
<feature type="region of interest" description="Disordered" evidence="3">
    <location>
        <begin position="67"/>
        <end position="145"/>
    </location>
</feature>
<feature type="compositionally biased region" description="Basic and acidic residues" evidence="3">
    <location>
        <begin position="120"/>
        <end position="132"/>
    </location>
</feature>
<feature type="compositionally biased region" description="Basic residues" evidence="3">
    <location>
        <begin position="133"/>
        <end position="142"/>
    </location>
</feature>
<feature type="modified residue" description="N,N,N-trimethylalanine; alternate" evidence="2">
    <location>
        <position position="2"/>
    </location>
</feature>
<feature type="modified residue" description="N,N-dimethylalanine; alternate" evidence="2">
    <location>
        <position position="2"/>
    </location>
</feature>
<feature type="modified residue" description="N-methylalanine; alternate" evidence="2">
    <location>
        <position position="2"/>
    </location>
</feature>
<keyword id="KW-0007">Acetylation</keyword>
<keyword id="KW-0158">Chromosome</keyword>
<keyword id="KW-0238">DNA-binding</keyword>
<keyword id="KW-0488">Methylation</keyword>
<keyword id="KW-0544">Nucleosome core</keyword>
<keyword id="KW-0539">Nucleus</keyword>
<keyword id="KW-1185">Reference proteome</keyword>